<sequence length="85" mass="9882">MVLNPSKYQDTRTWKMTPAMIRARKPFFKGNMLGLTLLLGVTGSVYYYTYHFLHKDNDFADVPIPPIDPQELEALKKEYEAKKKA</sequence>
<dbReference type="EMBL" id="ACFL01000138">
    <property type="protein sequence ID" value="EEU06759.1"/>
    <property type="molecule type" value="Genomic_DNA"/>
</dbReference>
<dbReference type="SMR" id="C7GR49"/>
<dbReference type="Proteomes" id="UP000008073">
    <property type="component" value="Unassembled WGS sequence"/>
</dbReference>
<dbReference type="GO" id="GO:0005743">
    <property type="term" value="C:mitochondrial inner membrane"/>
    <property type="evidence" value="ECO:0007669"/>
    <property type="project" value="UniProtKB-SubCell"/>
</dbReference>
<dbReference type="GO" id="GO:0033617">
    <property type="term" value="P:mitochondrial cytochrome c oxidase assembly"/>
    <property type="evidence" value="ECO:0007669"/>
    <property type="project" value="InterPro"/>
</dbReference>
<dbReference type="InterPro" id="IPR041752">
    <property type="entry name" value="Coa3"/>
</dbReference>
<dbReference type="PANTHER" id="PTHR15642:SF3">
    <property type="entry name" value="CYTOCHROME C OXIDASE ASSEMBLY FACTOR 3 HOMOLOG, MITOCHONDRIAL"/>
    <property type="match status" value="1"/>
</dbReference>
<dbReference type="PANTHER" id="PTHR15642">
    <property type="entry name" value="CYTOCHROME C OXIDASE ASSEMBLY FACTOR 3, MITOCHONDRIAL"/>
    <property type="match status" value="1"/>
</dbReference>
<organism>
    <name type="scientific">Saccharomyces cerevisiae (strain JAY291)</name>
    <name type="common">Baker's yeast</name>
    <dbReference type="NCBI Taxonomy" id="574961"/>
    <lineage>
        <taxon>Eukaryota</taxon>
        <taxon>Fungi</taxon>
        <taxon>Dikarya</taxon>
        <taxon>Ascomycota</taxon>
        <taxon>Saccharomycotina</taxon>
        <taxon>Saccharomycetes</taxon>
        <taxon>Saccharomycetales</taxon>
        <taxon>Saccharomycetaceae</taxon>
        <taxon>Saccharomyces</taxon>
    </lineage>
</organism>
<protein>
    <recommendedName>
        <fullName>Cytochrome c oxidase assembly factor 3, mitochondrial</fullName>
    </recommendedName>
    <alternativeName>
        <fullName>Cytochrome c oxidase protein 25</fullName>
    </alternativeName>
    <alternativeName>
        <fullName>Required for respiratory growth protein 10</fullName>
    </alternativeName>
</protein>
<accession>C7GR49</accession>
<keyword id="KW-0472">Membrane</keyword>
<keyword id="KW-0496">Mitochondrion</keyword>
<keyword id="KW-0999">Mitochondrion inner membrane</keyword>
<keyword id="KW-0812">Transmembrane</keyword>
<keyword id="KW-1133">Transmembrane helix</keyword>
<reference key="1">
    <citation type="journal article" date="2009" name="Genome Res.">
        <title>Genome structure of a Saccharomyces cerevisiae strain widely used in bioethanol production.</title>
        <authorList>
            <person name="Argueso J.L."/>
            <person name="Carazzolle M.F."/>
            <person name="Mieczkowski P.A."/>
            <person name="Duarte F.M."/>
            <person name="Netto O.V.C."/>
            <person name="Missawa S.K."/>
            <person name="Galzerani F."/>
            <person name="Costa G.G.L."/>
            <person name="Vidal R.O."/>
            <person name="Noronha M.F."/>
            <person name="Dominska M."/>
            <person name="Andrietta M.G.S."/>
            <person name="Andrietta S.R."/>
            <person name="Cunha A.F."/>
            <person name="Gomes L.H."/>
            <person name="Tavares F.C.A."/>
            <person name="Alcarde A.R."/>
            <person name="Dietrich F.S."/>
            <person name="McCusker J.H."/>
            <person name="Petes T.D."/>
            <person name="Pereira G.A.G."/>
        </authorList>
    </citation>
    <scope>NUCLEOTIDE SEQUENCE [LARGE SCALE GENOMIC DNA]</scope>
    <source>
        <strain>JAY291</strain>
    </source>
</reference>
<name>COA3_YEAS2</name>
<gene>
    <name type="primary">COA3</name>
    <name type="synonym">COX25</name>
    <name type="synonym">RRG10</name>
    <name type="ORF">C1Q_02822</name>
</gene>
<evidence type="ECO:0000250" key="1"/>
<evidence type="ECO:0000255" key="2"/>
<evidence type="ECO:0000305" key="3"/>
<comment type="function">
    <text evidence="1">Required for assembly of cytochrome c oxidase (complex IV). With COX14, negatively regulates COX1 translation and is involved in MSS51 association with newly synthesized COX1 (By similarity).</text>
</comment>
<comment type="subunit">
    <text evidence="1">Component of 250-400 kDa complexes called cytochrome oxidase assembly intermediates or COA complexes composed at least COA3, COX14, COX5A, SHY1 and SSC1. Interacts with COX1 and MSS51.</text>
</comment>
<comment type="subcellular location">
    <subcellularLocation>
        <location evidence="1">Mitochondrion inner membrane</location>
        <topology>Single-pass membrane protein</topology>
    </subcellularLocation>
</comment>
<comment type="similarity">
    <text evidence="3">Belongs to the COA3 family.</text>
</comment>
<proteinExistence type="inferred from homology"/>
<feature type="chain" id="PRO_0000405447" description="Cytochrome c oxidase assembly factor 3, mitochondrial">
    <location>
        <begin position="1"/>
        <end position="85"/>
    </location>
</feature>
<feature type="topological domain" description="Mitochondrial matrix" evidence="1">
    <location>
        <begin position="1"/>
        <end position="26"/>
    </location>
</feature>
<feature type="transmembrane region" description="Helical" evidence="2">
    <location>
        <begin position="27"/>
        <end position="49"/>
    </location>
</feature>
<feature type="topological domain" description="Mitochondrial intermembrane" evidence="1">
    <location>
        <begin position="50"/>
        <end position="85"/>
    </location>
</feature>